<protein>
    <recommendedName>
        <fullName evidence="1">UPF0397 protein BCE_2667</fullName>
    </recommendedName>
</protein>
<name>Y2667_BACC1</name>
<proteinExistence type="inferred from homology"/>
<comment type="subcellular location">
    <subcellularLocation>
        <location evidence="1">Cell membrane</location>
        <topology evidence="1">Multi-pass membrane protein</topology>
    </subcellularLocation>
</comment>
<comment type="similarity">
    <text evidence="1">Belongs to the UPF0397 family.</text>
</comment>
<dbReference type="EMBL" id="AE017194">
    <property type="protein sequence ID" value="AAS41581.1"/>
    <property type="molecule type" value="Genomic_DNA"/>
</dbReference>
<dbReference type="SMR" id="Q737I1"/>
<dbReference type="KEGG" id="bca:BCE_2667"/>
<dbReference type="HOGENOM" id="CLU_120023_0_0_9"/>
<dbReference type="Proteomes" id="UP000002527">
    <property type="component" value="Chromosome"/>
</dbReference>
<dbReference type="GO" id="GO:0005886">
    <property type="term" value="C:plasma membrane"/>
    <property type="evidence" value="ECO:0007669"/>
    <property type="project" value="UniProtKB-SubCell"/>
</dbReference>
<dbReference type="Gene3D" id="1.10.1760.20">
    <property type="match status" value="1"/>
</dbReference>
<dbReference type="HAMAP" id="MF_01572">
    <property type="entry name" value="UPF0397"/>
    <property type="match status" value="1"/>
</dbReference>
<dbReference type="InterPro" id="IPR009825">
    <property type="entry name" value="ECF_substrate-spec-like"/>
</dbReference>
<dbReference type="InterPro" id="IPR022914">
    <property type="entry name" value="UPF0397"/>
</dbReference>
<dbReference type="NCBIfam" id="NF010182">
    <property type="entry name" value="PRK13661.1"/>
    <property type="match status" value="1"/>
</dbReference>
<dbReference type="PANTHER" id="PTHR37815">
    <property type="entry name" value="UPF0397 PROTEIN BC_2624-RELATED"/>
    <property type="match status" value="1"/>
</dbReference>
<dbReference type="PANTHER" id="PTHR37815:SF3">
    <property type="entry name" value="UPF0397 PROTEIN SPR0429"/>
    <property type="match status" value="1"/>
</dbReference>
<dbReference type="Pfam" id="PF07155">
    <property type="entry name" value="ECF-ribofla_trS"/>
    <property type="match status" value="1"/>
</dbReference>
<reference key="1">
    <citation type="journal article" date="2004" name="Nucleic Acids Res.">
        <title>The genome sequence of Bacillus cereus ATCC 10987 reveals metabolic adaptations and a large plasmid related to Bacillus anthracis pXO1.</title>
        <authorList>
            <person name="Rasko D.A."/>
            <person name="Ravel J."/>
            <person name="Oekstad O.A."/>
            <person name="Helgason E."/>
            <person name="Cer R.Z."/>
            <person name="Jiang L."/>
            <person name="Shores K.A."/>
            <person name="Fouts D.E."/>
            <person name="Tourasse N.J."/>
            <person name="Angiuoli S.V."/>
            <person name="Kolonay J.F."/>
            <person name="Nelson W.C."/>
            <person name="Kolstoe A.-B."/>
            <person name="Fraser C.M."/>
            <person name="Read T.D."/>
        </authorList>
    </citation>
    <scope>NUCLEOTIDE SEQUENCE [LARGE SCALE GENOMIC DNA]</scope>
    <source>
        <strain>ATCC 10987 / NRS 248</strain>
    </source>
</reference>
<sequence>MNKLSTKLVVAIGIGAALYGILGLWGFSIAPNTFIKPALAILTIFGALFGPVAGLLIGLIGHTVTDTIAGWGIWWGWVFSSGIIGFAMGLIQKRVGFSVKNGTYNKGDISYLAITGLIGIVIAIIFAGAFDIIVMGEPFDKIVIQVLGATIADVIVFLVLGLPITIGLAKSNKKHTHLKIEK</sequence>
<keyword id="KW-1003">Cell membrane</keyword>
<keyword id="KW-0472">Membrane</keyword>
<keyword id="KW-0812">Transmembrane</keyword>
<keyword id="KW-1133">Transmembrane helix</keyword>
<accession>Q737I1</accession>
<feature type="chain" id="PRO_0000260785" description="UPF0397 protein BCE_2667">
    <location>
        <begin position="1"/>
        <end position="182"/>
    </location>
</feature>
<feature type="transmembrane region" description="Helical" evidence="1">
    <location>
        <begin position="9"/>
        <end position="29"/>
    </location>
</feature>
<feature type="transmembrane region" description="Helical" evidence="1">
    <location>
        <begin position="40"/>
        <end position="60"/>
    </location>
</feature>
<feature type="transmembrane region" description="Helical" evidence="1">
    <location>
        <begin position="71"/>
        <end position="91"/>
    </location>
</feature>
<feature type="transmembrane region" description="Helical" evidence="1">
    <location>
        <begin position="114"/>
        <end position="134"/>
    </location>
</feature>
<feature type="transmembrane region" description="Helical" evidence="1">
    <location>
        <begin position="142"/>
        <end position="162"/>
    </location>
</feature>
<gene>
    <name type="ordered locus">BCE_2667</name>
</gene>
<evidence type="ECO:0000255" key="1">
    <source>
        <dbReference type="HAMAP-Rule" id="MF_01572"/>
    </source>
</evidence>
<organism>
    <name type="scientific">Bacillus cereus (strain ATCC 10987 / NRS 248)</name>
    <dbReference type="NCBI Taxonomy" id="222523"/>
    <lineage>
        <taxon>Bacteria</taxon>
        <taxon>Bacillati</taxon>
        <taxon>Bacillota</taxon>
        <taxon>Bacilli</taxon>
        <taxon>Bacillales</taxon>
        <taxon>Bacillaceae</taxon>
        <taxon>Bacillus</taxon>
        <taxon>Bacillus cereus group</taxon>
    </lineage>
</organism>